<evidence type="ECO:0000255" key="1">
    <source>
        <dbReference type="HAMAP-Rule" id="MF_00286"/>
    </source>
</evidence>
<sequence length="175" mass="19338">MTAFTRFAHSRASWLILTGSAIALEAAALYFQYVMKLDPCVMCIYQRLAVFGILAAGLIGMTAPKYRIVRILGALGWAVSATWGLKLALALVDMQNNPSPFSTCSFLPEFPAWMPLHEWFPSVMLPTGMCTDVPWQFMGVTMAEWMVVAFSGYLVALLLFIVPILSGSNKPSLYK</sequence>
<comment type="function">
    <text evidence="1">Required for disulfide bond formation in some periplasmic proteins. Acts by oxidizing the DsbA protein.</text>
</comment>
<comment type="subcellular location">
    <subcellularLocation>
        <location evidence="1">Cell inner membrane</location>
        <topology evidence="1">Multi-pass membrane protein</topology>
    </subcellularLocation>
</comment>
<comment type="similarity">
    <text evidence="1">Belongs to the DsbB family.</text>
</comment>
<accession>Q0HW69</accession>
<dbReference type="EMBL" id="CP000444">
    <property type="protein sequence ID" value="ABI42636.1"/>
    <property type="molecule type" value="Genomic_DNA"/>
</dbReference>
<dbReference type="KEGG" id="shm:Shewmr7_1641"/>
<dbReference type="HOGENOM" id="CLU_098660_2_0_6"/>
<dbReference type="GO" id="GO:0005886">
    <property type="term" value="C:plasma membrane"/>
    <property type="evidence" value="ECO:0007669"/>
    <property type="project" value="UniProtKB-SubCell"/>
</dbReference>
<dbReference type="GO" id="GO:0009055">
    <property type="term" value="F:electron transfer activity"/>
    <property type="evidence" value="ECO:0007669"/>
    <property type="project" value="UniProtKB-UniRule"/>
</dbReference>
<dbReference type="GO" id="GO:0015035">
    <property type="term" value="F:protein-disulfide reductase activity"/>
    <property type="evidence" value="ECO:0007669"/>
    <property type="project" value="UniProtKB-UniRule"/>
</dbReference>
<dbReference type="GO" id="GO:0006457">
    <property type="term" value="P:protein folding"/>
    <property type="evidence" value="ECO:0007669"/>
    <property type="project" value="InterPro"/>
</dbReference>
<dbReference type="FunFam" id="1.20.1550.10:FF:000006">
    <property type="entry name" value="Disulfide bond formation protein B"/>
    <property type="match status" value="1"/>
</dbReference>
<dbReference type="Gene3D" id="1.20.1550.10">
    <property type="entry name" value="DsbB-like"/>
    <property type="match status" value="1"/>
</dbReference>
<dbReference type="HAMAP" id="MF_00286">
    <property type="entry name" value="DsbB"/>
    <property type="match status" value="1"/>
</dbReference>
<dbReference type="InterPro" id="IPR003752">
    <property type="entry name" value="DiS_bond_form_DsbB/BdbC"/>
</dbReference>
<dbReference type="InterPro" id="IPR022920">
    <property type="entry name" value="Disulphide_bond_form_DsbB"/>
</dbReference>
<dbReference type="InterPro" id="IPR050183">
    <property type="entry name" value="DsbB"/>
</dbReference>
<dbReference type="InterPro" id="IPR023380">
    <property type="entry name" value="DsbB-like_sf"/>
</dbReference>
<dbReference type="NCBIfam" id="NF002485">
    <property type="entry name" value="PRK01749.1"/>
    <property type="match status" value="1"/>
</dbReference>
<dbReference type="PANTHER" id="PTHR36570">
    <property type="entry name" value="DISULFIDE BOND FORMATION PROTEIN B"/>
    <property type="match status" value="1"/>
</dbReference>
<dbReference type="PANTHER" id="PTHR36570:SF2">
    <property type="entry name" value="DISULFIDE BOND FORMATION PROTEIN B"/>
    <property type="match status" value="1"/>
</dbReference>
<dbReference type="Pfam" id="PF02600">
    <property type="entry name" value="DsbB"/>
    <property type="match status" value="1"/>
</dbReference>
<dbReference type="SUPFAM" id="SSF158442">
    <property type="entry name" value="DsbB-like"/>
    <property type="match status" value="1"/>
</dbReference>
<organism>
    <name type="scientific">Shewanella sp. (strain MR-7)</name>
    <dbReference type="NCBI Taxonomy" id="60481"/>
    <lineage>
        <taxon>Bacteria</taxon>
        <taxon>Pseudomonadati</taxon>
        <taxon>Pseudomonadota</taxon>
        <taxon>Gammaproteobacteria</taxon>
        <taxon>Alteromonadales</taxon>
        <taxon>Shewanellaceae</taxon>
        <taxon>Shewanella</taxon>
    </lineage>
</organism>
<keyword id="KW-0997">Cell inner membrane</keyword>
<keyword id="KW-1003">Cell membrane</keyword>
<keyword id="KW-0143">Chaperone</keyword>
<keyword id="KW-1015">Disulfide bond</keyword>
<keyword id="KW-0249">Electron transport</keyword>
<keyword id="KW-0472">Membrane</keyword>
<keyword id="KW-0560">Oxidoreductase</keyword>
<keyword id="KW-0676">Redox-active center</keyword>
<keyword id="KW-0812">Transmembrane</keyword>
<keyword id="KW-1133">Transmembrane helix</keyword>
<keyword id="KW-0813">Transport</keyword>
<feature type="chain" id="PRO_0000298412" description="Disulfide bond formation protein B">
    <location>
        <begin position="1"/>
        <end position="175"/>
    </location>
</feature>
<feature type="topological domain" description="Cytoplasmic" evidence="1">
    <location>
        <begin position="1"/>
        <end position="13"/>
    </location>
</feature>
<feature type="transmembrane region" description="Helical" evidence="1">
    <location>
        <begin position="14"/>
        <end position="30"/>
    </location>
</feature>
<feature type="topological domain" description="Periplasmic" evidence="1">
    <location>
        <begin position="31"/>
        <end position="48"/>
    </location>
</feature>
<feature type="transmembrane region" description="Helical" evidence="1">
    <location>
        <begin position="49"/>
        <end position="64"/>
    </location>
</feature>
<feature type="topological domain" description="Cytoplasmic" evidence="1">
    <location>
        <begin position="65"/>
        <end position="71"/>
    </location>
</feature>
<feature type="transmembrane region" description="Helical" evidence="1">
    <location>
        <begin position="72"/>
        <end position="89"/>
    </location>
</feature>
<feature type="topological domain" description="Periplasmic" evidence="1">
    <location>
        <begin position="90"/>
        <end position="144"/>
    </location>
</feature>
<feature type="transmembrane region" description="Helical" evidence="1">
    <location>
        <begin position="145"/>
        <end position="163"/>
    </location>
</feature>
<feature type="topological domain" description="Cytoplasmic" evidence="1">
    <location>
        <begin position="164"/>
        <end position="175"/>
    </location>
</feature>
<feature type="disulfide bond" description="Redox-active" evidence="1">
    <location>
        <begin position="40"/>
        <end position="43"/>
    </location>
</feature>
<feature type="disulfide bond" description="Redox-active" evidence="1">
    <location>
        <begin position="104"/>
        <end position="130"/>
    </location>
</feature>
<protein>
    <recommendedName>
        <fullName evidence="1">Disulfide bond formation protein B</fullName>
    </recommendedName>
    <alternativeName>
        <fullName evidence="1">Disulfide oxidoreductase</fullName>
    </alternativeName>
</protein>
<gene>
    <name evidence="1" type="primary">dsbB</name>
    <name type="ordered locus">Shewmr7_1641</name>
</gene>
<reference key="1">
    <citation type="submission" date="2006-08" db="EMBL/GenBank/DDBJ databases">
        <title>Complete sequence of chromosome 1 of Shewanella sp. MR-7.</title>
        <authorList>
            <person name="Copeland A."/>
            <person name="Lucas S."/>
            <person name="Lapidus A."/>
            <person name="Barry K."/>
            <person name="Detter J.C."/>
            <person name="Glavina del Rio T."/>
            <person name="Hammon N."/>
            <person name="Israni S."/>
            <person name="Dalin E."/>
            <person name="Tice H."/>
            <person name="Pitluck S."/>
            <person name="Kiss H."/>
            <person name="Brettin T."/>
            <person name="Bruce D."/>
            <person name="Han C."/>
            <person name="Tapia R."/>
            <person name="Gilna P."/>
            <person name="Schmutz J."/>
            <person name="Larimer F."/>
            <person name="Land M."/>
            <person name="Hauser L."/>
            <person name="Kyrpides N."/>
            <person name="Mikhailova N."/>
            <person name="Nealson K."/>
            <person name="Konstantinidis K."/>
            <person name="Klappenbach J."/>
            <person name="Tiedje J."/>
            <person name="Richardson P."/>
        </authorList>
    </citation>
    <scope>NUCLEOTIDE SEQUENCE [LARGE SCALE GENOMIC DNA]</scope>
    <source>
        <strain>MR-7</strain>
    </source>
</reference>
<name>DSBB_SHESR</name>
<proteinExistence type="inferred from homology"/>